<evidence type="ECO:0000255" key="1">
    <source>
        <dbReference type="HAMAP-Rule" id="MF_00110"/>
    </source>
</evidence>
<accession>A1AGR6</accession>
<dbReference type="EC" id="4.2.3.4" evidence="1"/>
<dbReference type="EMBL" id="CP000468">
    <property type="protein sequence ID" value="ABJ02856.1"/>
    <property type="molecule type" value="Genomic_DNA"/>
</dbReference>
<dbReference type="RefSeq" id="WP_000439850.1">
    <property type="nucleotide sequence ID" value="NZ_CADILS010000030.1"/>
</dbReference>
<dbReference type="SMR" id="A1AGR6"/>
<dbReference type="KEGG" id="ecv:APECO1_3074"/>
<dbReference type="HOGENOM" id="CLU_001201_0_2_6"/>
<dbReference type="UniPathway" id="UPA00053">
    <property type="reaction ID" value="UER00085"/>
</dbReference>
<dbReference type="Proteomes" id="UP000008216">
    <property type="component" value="Chromosome"/>
</dbReference>
<dbReference type="GO" id="GO:0005737">
    <property type="term" value="C:cytoplasm"/>
    <property type="evidence" value="ECO:0007669"/>
    <property type="project" value="UniProtKB-SubCell"/>
</dbReference>
<dbReference type="GO" id="GO:0003856">
    <property type="term" value="F:3-dehydroquinate synthase activity"/>
    <property type="evidence" value="ECO:0007669"/>
    <property type="project" value="UniProtKB-UniRule"/>
</dbReference>
<dbReference type="GO" id="GO:0046872">
    <property type="term" value="F:metal ion binding"/>
    <property type="evidence" value="ECO:0007669"/>
    <property type="project" value="UniProtKB-KW"/>
</dbReference>
<dbReference type="GO" id="GO:0000166">
    <property type="term" value="F:nucleotide binding"/>
    <property type="evidence" value="ECO:0007669"/>
    <property type="project" value="UniProtKB-KW"/>
</dbReference>
<dbReference type="GO" id="GO:0008652">
    <property type="term" value="P:amino acid biosynthetic process"/>
    <property type="evidence" value="ECO:0007669"/>
    <property type="project" value="UniProtKB-KW"/>
</dbReference>
<dbReference type="GO" id="GO:0009073">
    <property type="term" value="P:aromatic amino acid family biosynthetic process"/>
    <property type="evidence" value="ECO:0007669"/>
    <property type="project" value="UniProtKB-KW"/>
</dbReference>
<dbReference type="GO" id="GO:0009423">
    <property type="term" value="P:chorismate biosynthetic process"/>
    <property type="evidence" value="ECO:0007669"/>
    <property type="project" value="UniProtKB-UniRule"/>
</dbReference>
<dbReference type="CDD" id="cd08195">
    <property type="entry name" value="DHQS"/>
    <property type="match status" value="1"/>
</dbReference>
<dbReference type="FunFam" id="1.20.1090.10:FF:000002">
    <property type="entry name" value="3-dehydroquinate synthase"/>
    <property type="match status" value="1"/>
</dbReference>
<dbReference type="FunFam" id="3.40.50.1970:FF:000001">
    <property type="entry name" value="3-dehydroquinate synthase"/>
    <property type="match status" value="1"/>
</dbReference>
<dbReference type="Gene3D" id="3.40.50.1970">
    <property type="match status" value="1"/>
</dbReference>
<dbReference type="Gene3D" id="1.20.1090.10">
    <property type="entry name" value="Dehydroquinate synthase-like - alpha domain"/>
    <property type="match status" value="1"/>
</dbReference>
<dbReference type="HAMAP" id="MF_00110">
    <property type="entry name" value="DHQ_synthase"/>
    <property type="match status" value="1"/>
</dbReference>
<dbReference type="InterPro" id="IPR050071">
    <property type="entry name" value="Dehydroquinate_synthase"/>
</dbReference>
<dbReference type="InterPro" id="IPR016037">
    <property type="entry name" value="DHQ_synth_AroB"/>
</dbReference>
<dbReference type="InterPro" id="IPR030963">
    <property type="entry name" value="DHQ_synth_fam"/>
</dbReference>
<dbReference type="InterPro" id="IPR030960">
    <property type="entry name" value="DHQS/DOIS_N"/>
</dbReference>
<dbReference type="InterPro" id="IPR056179">
    <property type="entry name" value="DHQS_C"/>
</dbReference>
<dbReference type="NCBIfam" id="TIGR01357">
    <property type="entry name" value="aroB"/>
    <property type="match status" value="1"/>
</dbReference>
<dbReference type="PANTHER" id="PTHR43622">
    <property type="entry name" value="3-DEHYDROQUINATE SYNTHASE"/>
    <property type="match status" value="1"/>
</dbReference>
<dbReference type="PANTHER" id="PTHR43622:SF7">
    <property type="entry name" value="3-DEHYDROQUINATE SYNTHASE, CHLOROPLASTIC"/>
    <property type="match status" value="1"/>
</dbReference>
<dbReference type="Pfam" id="PF01761">
    <property type="entry name" value="DHQ_synthase"/>
    <property type="match status" value="1"/>
</dbReference>
<dbReference type="Pfam" id="PF24621">
    <property type="entry name" value="DHQS_C"/>
    <property type="match status" value="1"/>
</dbReference>
<dbReference type="PIRSF" id="PIRSF001455">
    <property type="entry name" value="DHQ_synth"/>
    <property type="match status" value="1"/>
</dbReference>
<dbReference type="SUPFAM" id="SSF56796">
    <property type="entry name" value="Dehydroquinate synthase-like"/>
    <property type="match status" value="1"/>
</dbReference>
<organism>
    <name type="scientific">Escherichia coli O1:K1 / APEC</name>
    <dbReference type="NCBI Taxonomy" id="405955"/>
    <lineage>
        <taxon>Bacteria</taxon>
        <taxon>Pseudomonadati</taxon>
        <taxon>Pseudomonadota</taxon>
        <taxon>Gammaproteobacteria</taxon>
        <taxon>Enterobacterales</taxon>
        <taxon>Enterobacteriaceae</taxon>
        <taxon>Escherichia</taxon>
    </lineage>
</organism>
<proteinExistence type="inferred from homology"/>
<name>AROB_ECOK1</name>
<comment type="function">
    <text evidence="1">Catalyzes the conversion of 3-deoxy-D-arabino-heptulosonate 7-phosphate (DAHP) to dehydroquinate (DHQ).</text>
</comment>
<comment type="catalytic activity">
    <reaction evidence="1">
        <text>7-phospho-2-dehydro-3-deoxy-D-arabino-heptonate = 3-dehydroquinate + phosphate</text>
        <dbReference type="Rhea" id="RHEA:21968"/>
        <dbReference type="ChEBI" id="CHEBI:32364"/>
        <dbReference type="ChEBI" id="CHEBI:43474"/>
        <dbReference type="ChEBI" id="CHEBI:58394"/>
        <dbReference type="EC" id="4.2.3.4"/>
    </reaction>
</comment>
<comment type="cofactor">
    <cofactor evidence="1">
        <name>Co(2+)</name>
        <dbReference type="ChEBI" id="CHEBI:48828"/>
    </cofactor>
    <cofactor evidence="1">
        <name>Zn(2+)</name>
        <dbReference type="ChEBI" id="CHEBI:29105"/>
    </cofactor>
    <text evidence="1">Binds 1 divalent metal cation per subunit. Can use either Co(2+) or Zn(2+).</text>
</comment>
<comment type="cofactor">
    <cofactor evidence="1">
        <name>NAD(+)</name>
        <dbReference type="ChEBI" id="CHEBI:57540"/>
    </cofactor>
</comment>
<comment type="pathway">
    <text evidence="1">Metabolic intermediate biosynthesis; chorismate biosynthesis; chorismate from D-erythrose 4-phosphate and phosphoenolpyruvate: step 2/7.</text>
</comment>
<comment type="subcellular location">
    <subcellularLocation>
        <location evidence="1">Cytoplasm</location>
    </subcellularLocation>
</comment>
<comment type="similarity">
    <text evidence="1">Belongs to the sugar phosphate cyclases superfamily. Dehydroquinate synthase family.</text>
</comment>
<feature type="chain" id="PRO_1000094509" description="3-dehydroquinate synthase">
    <location>
        <begin position="1"/>
        <end position="362"/>
    </location>
</feature>
<feature type="binding site" evidence="1">
    <location>
        <begin position="71"/>
        <end position="76"/>
    </location>
    <ligand>
        <name>NAD(+)</name>
        <dbReference type="ChEBI" id="CHEBI:57540"/>
    </ligand>
</feature>
<feature type="binding site" evidence="1">
    <location>
        <begin position="105"/>
        <end position="109"/>
    </location>
    <ligand>
        <name>NAD(+)</name>
        <dbReference type="ChEBI" id="CHEBI:57540"/>
    </ligand>
</feature>
<feature type="binding site" evidence="1">
    <location>
        <begin position="129"/>
        <end position="130"/>
    </location>
    <ligand>
        <name>NAD(+)</name>
        <dbReference type="ChEBI" id="CHEBI:57540"/>
    </ligand>
</feature>
<feature type="binding site" evidence="1">
    <location>
        <position position="142"/>
    </location>
    <ligand>
        <name>NAD(+)</name>
        <dbReference type="ChEBI" id="CHEBI:57540"/>
    </ligand>
</feature>
<feature type="binding site" evidence="1">
    <location>
        <position position="151"/>
    </location>
    <ligand>
        <name>NAD(+)</name>
        <dbReference type="ChEBI" id="CHEBI:57540"/>
    </ligand>
</feature>
<feature type="binding site" evidence="1">
    <location>
        <begin position="169"/>
        <end position="172"/>
    </location>
    <ligand>
        <name>NAD(+)</name>
        <dbReference type="ChEBI" id="CHEBI:57540"/>
    </ligand>
</feature>
<feature type="binding site" evidence="1">
    <location>
        <position position="184"/>
    </location>
    <ligand>
        <name>Zn(2+)</name>
        <dbReference type="ChEBI" id="CHEBI:29105"/>
    </ligand>
</feature>
<feature type="binding site" evidence="1">
    <location>
        <position position="247"/>
    </location>
    <ligand>
        <name>Zn(2+)</name>
        <dbReference type="ChEBI" id="CHEBI:29105"/>
    </ligand>
</feature>
<feature type="binding site" evidence="1">
    <location>
        <position position="264"/>
    </location>
    <ligand>
        <name>Zn(2+)</name>
        <dbReference type="ChEBI" id="CHEBI:29105"/>
    </ligand>
</feature>
<keyword id="KW-0028">Amino-acid biosynthesis</keyword>
<keyword id="KW-0057">Aromatic amino acid biosynthesis</keyword>
<keyword id="KW-0170">Cobalt</keyword>
<keyword id="KW-0963">Cytoplasm</keyword>
<keyword id="KW-0456">Lyase</keyword>
<keyword id="KW-0479">Metal-binding</keyword>
<keyword id="KW-0520">NAD</keyword>
<keyword id="KW-0547">Nucleotide-binding</keyword>
<keyword id="KW-1185">Reference proteome</keyword>
<keyword id="KW-0862">Zinc</keyword>
<gene>
    <name evidence="1" type="primary">aroB</name>
    <name type="ordered locus">Ecok1_33620</name>
    <name type="ORF">APECO1_3074</name>
</gene>
<reference key="1">
    <citation type="journal article" date="2007" name="J. Bacteriol.">
        <title>The genome sequence of avian pathogenic Escherichia coli strain O1:K1:H7 shares strong similarities with human extraintestinal pathogenic E. coli genomes.</title>
        <authorList>
            <person name="Johnson T.J."/>
            <person name="Kariyawasam S."/>
            <person name="Wannemuehler Y."/>
            <person name="Mangiamele P."/>
            <person name="Johnson S.J."/>
            <person name="Doetkott C."/>
            <person name="Skyberg J.A."/>
            <person name="Lynne A.M."/>
            <person name="Johnson J.R."/>
            <person name="Nolan L.K."/>
        </authorList>
    </citation>
    <scope>NUCLEOTIDE SEQUENCE [LARGE SCALE GENOMIC DNA]</scope>
</reference>
<protein>
    <recommendedName>
        <fullName evidence="1">3-dehydroquinate synthase</fullName>
        <shortName evidence="1">DHQS</shortName>
        <ecNumber evidence="1">4.2.3.4</ecNumber>
    </recommendedName>
</protein>
<sequence>MERIVVTLGERSYPITIASGLFNEPASFLPLKSGEQVMLVTNETLAPLYLDKVRGVLEQAGVNVDSVILPDGEQYKSLAVLDTVFTALLQKPHGRDTTLVALGGGVVGDLTGFAAASYQRGVRFIQVPTTLLSQVDSSVGGKTAVNHPLGKNMIGAFYQPASVVVDLDCLKTLPPRELASGLAEVIKYGIILDGAFFNWLEENLDALLRLDGPAMAYCIRRCCELKAEVVAADERETGLRALLNLGHTFGHAIEAEMGYGNWLHGEAVAAGMVMAARTSERLGQFSSAETQRIITLLTRAGLPVNGPREMSAQAYLPHMLRDKKVLAGEMRLILPLAIGKSEVRSGVSHELVLNAIADCQSA</sequence>